<evidence type="ECO:0000250" key="1">
    <source>
        <dbReference type="UniProtKB" id="O00409"/>
    </source>
</evidence>
<evidence type="ECO:0000250" key="2">
    <source>
        <dbReference type="UniProtKB" id="Q3BJS3"/>
    </source>
</evidence>
<evidence type="ECO:0000255" key="3">
    <source>
        <dbReference type="PROSITE-ProRule" id="PRU00089"/>
    </source>
</evidence>
<evidence type="ECO:0000256" key="4">
    <source>
        <dbReference type="SAM" id="MobiDB-lite"/>
    </source>
</evidence>
<evidence type="ECO:0000305" key="5"/>
<evidence type="ECO:0000312" key="6">
    <source>
        <dbReference type="EMBL" id="CAJ83827.1"/>
    </source>
</evidence>
<keyword id="KW-0131">Cell cycle</keyword>
<keyword id="KW-0238">DNA-binding</keyword>
<keyword id="KW-0539">Nucleus</keyword>
<keyword id="KW-1185">Reference proteome</keyword>
<keyword id="KW-0678">Repressor</keyword>
<keyword id="KW-0804">Transcription</keyword>
<keyword id="KW-0805">Transcription regulation</keyword>
<comment type="function">
    <text evidence="1">Acts as a transcriptional repressor. May be involved in DNA damage-inducible cell cycle arrests (checkpoints) (By similarity).</text>
</comment>
<comment type="subcellular location">
    <subcellularLocation>
        <location evidence="5">Nucleus</location>
    </subcellularLocation>
</comment>
<accession>Q28G71</accession>
<name>FOXN3_XENTR</name>
<gene>
    <name evidence="2" type="primary">foxn3</name>
    <name type="ORF">TGas136a14.1</name>
</gene>
<reference evidence="6" key="1">
    <citation type="submission" date="2006-03" db="EMBL/GenBank/DDBJ databases">
        <authorList>
            <consortium name="Sanger Xenopus tropicalis EST/cDNA project"/>
        </authorList>
    </citation>
    <scope>NUCLEOTIDE SEQUENCE [LARGE SCALE MRNA]</scope>
    <source>
        <tissue>Gastrula</tissue>
    </source>
</reference>
<proteinExistence type="evidence at transcript level"/>
<dbReference type="EMBL" id="CR761524">
    <property type="protein sequence ID" value="CAJ83827.1"/>
    <property type="molecule type" value="mRNA"/>
</dbReference>
<dbReference type="RefSeq" id="XP_012823843.1">
    <property type="nucleotide sequence ID" value="XM_012968389.3"/>
</dbReference>
<dbReference type="RefSeq" id="XP_012823844.1">
    <property type="nucleotide sequence ID" value="XM_012968390.2"/>
</dbReference>
<dbReference type="SMR" id="Q28G71"/>
<dbReference type="FunCoup" id="Q28G71">
    <property type="interactions" value="1104"/>
</dbReference>
<dbReference type="STRING" id="8364.ENSXETP00000023684"/>
<dbReference type="PaxDb" id="8364-ENSXETP00000036315"/>
<dbReference type="DNASU" id="549054"/>
<dbReference type="GeneID" id="549054"/>
<dbReference type="AGR" id="Xenbase:XB-GENE-483117"/>
<dbReference type="CTD" id="1112"/>
<dbReference type="Xenbase" id="XB-GENE-483117">
    <property type="gene designation" value="foxn3"/>
</dbReference>
<dbReference type="eggNOG" id="KOG2294">
    <property type="taxonomic scope" value="Eukaryota"/>
</dbReference>
<dbReference type="InParanoid" id="Q28G71"/>
<dbReference type="OrthoDB" id="5954824at2759"/>
<dbReference type="Proteomes" id="UP000008143">
    <property type="component" value="Chromosome 8"/>
</dbReference>
<dbReference type="Bgee" id="ENSXETG00000016645">
    <property type="expression patterns" value="Expressed in 2-cell stage embryo and 13 other cell types or tissues"/>
</dbReference>
<dbReference type="ExpressionAtlas" id="Q28G71">
    <property type="expression patterns" value="baseline and differential"/>
</dbReference>
<dbReference type="GO" id="GO:0005634">
    <property type="term" value="C:nucleus"/>
    <property type="evidence" value="ECO:0007669"/>
    <property type="project" value="UniProtKB-SubCell"/>
</dbReference>
<dbReference type="GO" id="GO:0003700">
    <property type="term" value="F:DNA-binding transcription factor activity"/>
    <property type="evidence" value="ECO:0007669"/>
    <property type="project" value="InterPro"/>
</dbReference>
<dbReference type="GO" id="GO:0043565">
    <property type="term" value="F:sequence-specific DNA binding"/>
    <property type="evidence" value="ECO:0007669"/>
    <property type="project" value="InterPro"/>
</dbReference>
<dbReference type="GO" id="GO:0045892">
    <property type="term" value="P:negative regulation of DNA-templated transcription"/>
    <property type="evidence" value="ECO:0000250"/>
    <property type="project" value="UniProtKB"/>
</dbReference>
<dbReference type="CDD" id="cd20059">
    <property type="entry name" value="FH_FOXN3"/>
    <property type="match status" value="1"/>
</dbReference>
<dbReference type="FunFam" id="1.10.10.10:FF:000167">
    <property type="entry name" value="forkhead box protein N3 isoform X1"/>
    <property type="match status" value="1"/>
</dbReference>
<dbReference type="Gene3D" id="1.10.10.10">
    <property type="entry name" value="Winged helix-like DNA-binding domain superfamily/Winged helix DNA-binding domain"/>
    <property type="match status" value="1"/>
</dbReference>
<dbReference type="InterPro" id="IPR047404">
    <property type="entry name" value="FH_FOXN3"/>
</dbReference>
<dbReference type="InterPro" id="IPR001766">
    <property type="entry name" value="Fork_head_dom"/>
</dbReference>
<dbReference type="InterPro" id="IPR047119">
    <property type="entry name" value="FOXN2/3-like"/>
</dbReference>
<dbReference type="InterPro" id="IPR018122">
    <property type="entry name" value="TF_fork_head_CS_1"/>
</dbReference>
<dbReference type="InterPro" id="IPR030456">
    <property type="entry name" value="TF_fork_head_CS_2"/>
</dbReference>
<dbReference type="InterPro" id="IPR036388">
    <property type="entry name" value="WH-like_DNA-bd_sf"/>
</dbReference>
<dbReference type="InterPro" id="IPR036390">
    <property type="entry name" value="WH_DNA-bd_sf"/>
</dbReference>
<dbReference type="PANTHER" id="PTHR13962:SF20">
    <property type="entry name" value="FORKHEAD BOX PROTEIN N3"/>
    <property type="match status" value="1"/>
</dbReference>
<dbReference type="PANTHER" id="PTHR13962">
    <property type="entry name" value="FORKHEAD BOX PROTEIN N3-LIKE PROTEIN-RELATED"/>
    <property type="match status" value="1"/>
</dbReference>
<dbReference type="Pfam" id="PF00250">
    <property type="entry name" value="Forkhead"/>
    <property type="match status" value="1"/>
</dbReference>
<dbReference type="PRINTS" id="PR00053">
    <property type="entry name" value="FORKHEAD"/>
</dbReference>
<dbReference type="SMART" id="SM00339">
    <property type="entry name" value="FH"/>
    <property type="match status" value="1"/>
</dbReference>
<dbReference type="SUPFAM" id="SSF46785">
    <property type="entry name" value="Winged helix' DNA-binding domain"/>
    <property type="match status" value="1"/>
</dbReference>
<dbReference type="PROSITE" id="PS00657">
    <property type="entry name" value="FORK_HEAD_1"/>
    <property type="match status" value="1"/>
</dbReference>
<dbReference type="PROSITE" id="PS00658">
    <property type="entry name" value="FORK_HEAD_2"/>
    <property type="match status" value="1"/>
</dbReference>
<dbReference type="PROSITE" id="PS50039">
    <property type="entry name" value="FORK_HEAD_3"/>
    <property type="match status" value="1"/>
</dbReference>
<protein>
    <recommendedName>
        <fullName>Forkhead box protein N3</fullName>
    </recommendedName>
</protein>
<sequence>MGPIMPPSKKPESTGISVSSQCYRSSTLSNPLHDDDDLDFPPPAVKINKEKGGMEDEELTNLNWLHESKNLLKSFGDTVLRSVSPVQDIDDDTPPSPAQSDMPYDAKQNPNCKPPYSFSCLIFMAIEDSPTKRLPVKDIYNWILEHFPYFANAPTGWKNSVRHNLSLNKCFKKVDKDRSQSIGKGSLWCIDPEYRQNLIQALKKTPYHPYSHVFNTPPTSPQAYQSTSVPPLWPGSTFFKKNGALLQVPPGVIQNGARVLNRGIFSGVRPLPINPIGAMAASVRNGIANCRTRMESEPSCGSPLVSSDPKDDHNYSSAKSANKRSSSPSDSISSSSADDHYEFAAKVCREGSDISFQSHESFSETEEEDKKQIKKELKDSLVESGYSSQHKKKQHLLKLRRIPSDALPLKKRRTEKPPESDDEEMKEAAGSLLHLAGIRSCLNNITNRTAKGQKEQKDKETTKN</sequence>
<organism>
    <name type="scientific">Xenopus tropicalis</name>
    <name type="common">Western clawed frog</name>
    <name type="synonym">Silurana tropicalis</name>
    <dbReference type="NCBI Taxonomy" id="8364"/>
    <lineage>
        <taxon>Eukaryota</taxon>
        <taxon>Metazoa</taxon>
        <taxon>Chordata</taxon>
        <taxon>Craniata</taxon>
        <taxon>Vertebrata</taxon>
        <taxon>Euteleostomi</taxon>
        <taxon>Amphibia</taxon>
        <taxon>Batrachia</taxon>
        <taxon>Anura</taxon>
        <taxon>Pipoidea</taxon>
        <taxon>Pipidae</taxon>
        <taxon>Xenopodinae</taxon>
        <taxon>Xenopus</taxon>
        <taxon>Silurana</taxon>
    </lineage>
</organism>
<feature type="chain" id="PRO_0000247735" description="Forkhead box protein N3">
    <location>
        <begin position="1"/>
        <end position="464"/>
    </location>
</feature>
<feature type="DNA-binding region" description="Fork-head" evidence="3">
    <location>
        <begin position="113"/>
        <end position="209"/>
    </location>
</feature>
<feature type="region of interest" description="Disordered" evidence="4">
    <location>
        <begin position="1"/>
        <end position="53"/>
    </location>
</feature>
<feature type="region of interest" description="Disordered" evidence="4">
    <location>
        <begin position="85"/>
        <end position="108"/>
    </location>
</feature>
<feature type="region of interest" description="Disordered" evidence="4">
    <location>
        <begin position="294"/>
        <end position="337"/>
    </location>
</feature>
<feature type="region of interest" description="Disordered" evidence="4">
    <location>
        <begin position="381"/>
        <end position="428"/>
    </location>
</feature>
<feature type="compositionally biased region" description="Polar residues" evidence="4">
    <location>
        <begin position="14"/>
        <end position="30"/>
    </location>
</feature>
<feature type="compositionally biased region" description="Low complexity" evidence="4">
    <location>
        <begin position="316"/>
        <end position="336"/>
    </location>
</feature>
<feature type="compositionally biased region" description="Basic residues" evidence="4">
    <location>
        <begin position="389"/>
        <end position="401"/>
    </location>
</feature>